<dbReference type="EC" id="2.7.13.3"/>
<dbReference type="EMBL" id="BA000033">
    <property type="protein sequence ID" value="BAB95310.1"/>
    <property type="status" value="ALT_INIT"/>
    <property type="molecule type" value="Genomic_DNA"/>
</dbReference>
<dbReference type="RefSeq" id="WP_000987769.1">
    <property type="nucleotide sequence ID" value="NC_003923.1"/>
</dbReference>
<dbReference type="SMR" id="Q8NWF3"/>
<dbReference type="KEGG" id="sam:MW1445"/>
<dbReference type="HOGENOM" id="CLU_000445_89_2_9"/>
<dbReference type="GO" id="GO:0005886">
    <property type="term" value="C:plasma membrane"/>
    <property type="evidence" value="ECO:0007669"/>
    <property type="project" value="UniProtKB-SubCell"/>
</dbReference>
<dbReference type="GO" id="GO:0005524">
    <property type="term" value="F:ATP binding"/>
    <property type="evidence" value="ECO:0007669"/>
    <property type="project" value="UniProtKB-KW"/>
</dbReference>
<dbReference type="GO" id="GO:0000156">
    <property type="term" value="F:phosphorelay response regulator activity"/>
    <property type="evidence" value="ECO:0007669"/>
    <property type="project" value="TreeGrafter"/>
</dbReference>
<dbReference type="GO" id="GO:0000155">
    <property type="term" value="F:phosphorelay sensor kinase activity"/>
    <property type="evidence" value="ECO:0007669"/>
    <property type="project" value="InterPro"/>
</dbReference>
<dbReference type="GO" id="GO:0030295">
    <property type="term" value="F:protein kinase activator activity"/>
    <property type="evidence" value="ECO:0007669"/>
    <property type="project" value="TreeGrafter"/>
</dbReference>
<dbReference type="GO" id="GO:0007234">
    <property type="term" value="P:osmosensory signaling via phosphorelay pathway"/>
    <property type="evidence" value="ECO:0007669"/>
    <property type="project" value="TreeGrafter"/>
</dbReference>
<dbReference type="CDD" id="cd06225">
    <property type="entry name" value="HAMP"/>
    <property type="match status" value="1"/>
</dbReference>
<dbReference type="CDD" id="cd00075">
    <property type="entry name" value="HATPase"/>
    <property type="match status" value="1"/>
</dbReference>
<dbReference type="CDD" id="cd00082">
    <property type="entry name" value="HisKA"/>
    <property type="match status" value="1"/>
</dbReference>
<dbReference type="FunFam" id="3.30.565.10:FF:000006">
    <property type="entry name" value="Sensor histidine kinase WalK"/>
    <property type="match status" value="1"/>
</dbReference>
<dbReference type="FunFam" id="1.10.287.130:FF:000001">
    <property type="entry name" value="Two-component sensor histidine kinase"/>
    <property type="match status" value="1"/>
</dbReference>
<dbReference type="Gene3D" id="1.10.287.130">
    <property type="match status" value="1"/>
</dbReference>
<dbReference type="Gene3D" id="6.10.340.10">
    <property type="match status" value="1"/>
</dbReference>
<dbReference type="Gene3D" id="3.30.565.10">
    <property type="entry name" value="Histidine kinase-like ATPase, C-terminal domain"/>
    <property type="match status" value="1"/>
</dbReference>
<dbReference type="InterPro" id="IPR003660">
    <property type="entry name" value="HAMP_dom"/>
</dbReference>
<dbReference type="InterPro" id="IPR036890">
    <property type="entry name" value="HATPase_C_sf"/>
</dbReference>
<dbReference type="InterPro" id="IPR005467">
    <property type="entry name" value="His_kinase_dom"/>
</dbReference>
<dbReference type="InterPro" id="IPR003661">
    <property type="entry name" value="HisK_dim/P_dom"/>
</dbReference>
<dbReference type="InterPro" id="IPR036097">
    <property type="entry name" value="HisK_dim/P_sf"/>
</dbReference>
<dbReference type="InterPro" id="IPR041328">
    <property type="entry name" value="HisK_sensor"/>
</dbReference>
<dbReference type="InterPro" id="IPR052545">
    <property type="entry name" value="Light-responsive_reg"/>
</dbReference>
<dbReference type="InterPro" id="IPR004358">
    <property type="entry name" value="Sig_transdc_His_kin-like_C"/>
</dbReference>
<dbReference type="PANTHER" id="PTHR42878:SF3">
    <property type="entry name" value="HISTIDINE PROTEIN KINASE SAES"/>
    <property type="match status" value="1"/>
</dbReference>
<dbReference type="PANTHER" id="PTHR42878">
    <property type="entry name" value="TWO-COMPONENT HISTIDINE KINASE"/>
    <property type="match status" value="1"/>
</dbReference>
<dbReference type="Pfam" id="PF00672">
    <property type="entry name" value="HAMP"/>
    <property type="match status" value="1"/>
</dbReference>
<dbReference type="Pfam" id="PF02518">
    <property type="entry name" value="HATPase_c"/>
    <property type="match status" value="1"/>
</dbReference>
<dbReference type="Pfam" id="PF18698">
    <property type="entry name" value="HisK_sensor"/>
    <property type="match status" value="1"/>
</dbReference>
<dbReference type="Pfam" id="PF00512">
    <property type="entry name" value="HisKA"/>
    <property type="match status" value="1"/>
</dbReference>
<dbReference type="PRINTS" id="PR00344">
    <property type="entry name" value="BCTRLSENSOR"/>
</dbReference>
<dbReference type="SMART" id="SM00304">
    <property type="entry name" value="HAMP"/>
    <property type="match status" value="1"/>
</dbReference>
<dbReference type="SMART" id="SM00387">
    <property type="entry name" value="HATPase_c"/>
    <property type="match status" value="1"/>
</dbReference>
<dbReference type="SMART" id="SM00388">
    <property type="entry name" value="HisKA"/>
    <property type="match status" value="1"/>
</dbReference>
<dbReference type="SUPFAM" id="SSF55874">
    <property type="entry name" value="ATPase domain of HSP90 chaperone/DNA topoisomerase II/histidine kinase"/>
    <property type="match status" value="1"/>
</dbReference>
<dbReference type="SUPFAM" id="SSF158472">
    <property type="entry name" value="HAMP domain-like"/>
    <property type="match status" value="1"/>
</dbReference>
<dbReference type="SUPFAM" id="SSF47384">
    <property type="entry name" value="Homodimeric domain of signal transducing histidine kinase"/>
    <property type="match status" value="1"/>
</dbReference>
<dbReference type="PROSITE" id="PS50885">
    <property type="entry name" value="HAMP"/>
    <property type="match status" value="1"/>
</dbReference>
<dbReference type="PROSITE" id="PS50109">
    <property type="entry name" value="HIS_KIN"/>
    <property type="match status" value="1"/>
</dbReference>
<organism>
    <name type="scientific">Staphylococcus aureus (strain MW2)</name>
    <dbReference type="NCBI Taxonomy" id="196620"/>
    <lineage>
        <taxon>Bacteria</taxon>
        <taxon>Bacillati</taxon>
        <taxon>Bacillota</taxon>
        <taxon>Bacilli</taxon>
        <taxon>Bacillales</taxon>
        <taxon>Staphylococcaceae</taxon>
        <taxon>Staphylococcus</taxon>
    </lineage>
</organism>
<name>SRRB_STAAW</name>
<sequence>MMSRLNSVVIKLWLTIILIVTTVLILLSIALITFMQYYFTQETENAIREDARRISSLVEQSHNKEEAIKYSQTLIENPGGLMIINNKHRQSTASLSNIKKQMLNEVVNNDHFDDVFDKGKSVTRNVTIKEKGSSQTYILLGYPTKAQKNSHSKYSGVFIYKDLKSIEDTNNAITIITIITAVIFLTITTVFAFFLSSRITKPLRRLRDQATRVSEGDYSYKPSVTTKDEIGQLSQAFNQMSTEIEEHVDALSTSKNIRDSLINSMVEGVLGINESRQIILSNKMANDIMDNIDEDAKAFLLRQIEDTFKSKQTEMRDLEMNARFFVVTTSYIDKIEQGGKSGVVVTVRDMTNEHNLDQMKKDFIANVSHELRTPISLLQGYTESIVDGIVTEPDEIKESLAIVLDESKRLNRLVNELLNVARMDAEGLSVNKEVQPIAALLDKMKIKYRQQADDLGLNMTFNYCKKRVWSYDMDRMDQVLTNLIDNASRYTKPGDEIAITCDENESEDILYIKDTGTGIAPEHLQQVFDRFYKVDAARTRGKQGTGLGLFICKMIIEEHGGSIDVKSELGKGTTFIIKLPKPE</sequence>
<proteinExistence type="inferred from homology"/>
<feature type="chain" id="PRO_0000074887" description="Sensor protein SrrB">
    <location>
        <begin position="1"/>
        <end position="583"/>
    </location>
</feature>
<feature type="topological domain" description="Cytoplasmic" evidence="3">
    <location>
        <begin position="1"/>
        <end position="11"/>
    </location>
</feature>
<feature type="transmembrane region" description="Helical" evidence="3">
    <location>
        <begin position="12"/>
        <end position="32"/>
    </location>
</feature>
<feature type="topological domain" description="Extracellular" evidence="3">
    <location>
        <begin position="33"/>
        <end position="174"/>
    </location>
</feature>
<feature type="transmembrane region" description="Helical" evidence="3">
    <location>
        <begin position="175"/>
        <end position="195"/>
    </location>
</feature>
<feature type="topological domain" description="Cytoplasmic" evidence="3">
    <location>
        <begin position="196"/>
        <end position="583"/>
    </location>
</feature>
<feature type="domain" description="HAMP" evidence="4">
    <location>
        <begin position="197"/>
        <end position="249"/>
    </location>
</feature>
<feature type="domain" description="Histidine kinase" evidence="5">
    <location>
        <begin position="366"/>
        <end position="583"/>
    </location>
</feature>
<feature type="modified residue" description="Phosphohistidine; by autocatalysis" evidence="5">
    <location>
        <position position="369"/>
    </location>
</feature>
<keyword id="KW-0067">ATP-binding</keyword>
<keyword id="KW-1003">Cell membrane</keyword>
<keyword id="KW-0418">Kinase</keyword>
<keyword id="KW-0472">Membrane</keyword>
<keyword id="KW-0547">Nucleotide-binding</keyword>
<keyword id="KW-0597">Phosphoprotein</keyword>
<keyword id="KW-0808">Transferase</keyword>
<keyword id="KW-0812">Transmembrane</keyword>
<keyword id="KW-1133">Transmembrane helix</keyword>
<keyword id="KW-0902">Two-component regulatory system</keyword>
<evidence type="ECO:0000250" key="1"/>
<evidence type="ECO:0000250" key="2">
    <source>
        <dbReference type="UniProtKB" id="Q5HFT1"/>
    </source>
</evidence>
<evidence type="ECO:0000255" key="3"/>
<evidence type="ECO:0000255" key="4">
    <source>
        <dbReference type="PROSITE-ProRule" id="PRU00102"/>
    </source>
</evidence>
<evidence type="ECO:0000255" key="5">
    <source>
        <dbReference type="PROSITE-ProRule" id="PRU00107"/>
    </source>
</evidence>
<evidence type="ECO:0000305" key="6"/>
<protein>
    <recommendedName>
        <fullName>Sensor protein SrrB</fullName>
        <ecNumber>2.7.13.3</ecNumber>
    </recommendedName>
    <alternativeName>
        <fullName>Staphylococcal respiratory response protein B</fullName>
    </alternativeName>
</protein>
<comment type="function">
    <text evidence="2">Member of the two-component regulatory system SrrA/SrrB, which is involved in the global regulation of staphylococcal virulence factors in response to environmental oxygen levels as well as biofilm formation. Also plays an essential role in host-derived nitric oxide resistance by regulating hmp/flavohemoglobin, an enzyme that detoxifies nitric oxide by converting it to nitrate. Functions as a sensor protein kinase which is autophosphorylated at a histidine residue and transfers its phosphate group to SrrA. In turn, SrrA binds to the upstream promoter regions of the target genes to positively and negatively regulate their expression.</text>
</comment>
<comment type="catalytic activity">
    <reaction>
        <text>ATP + protein L-histidine = ADP + protein N-phospho-L-histidine.</text>
        <dbReference type="EC" id="2.7.13.3"/>
    </reaction>
</comment>
<comment type="subcellular location">
    <subcellularLocation>
        <location evidence="1">Cell membrane</location>
        <topology evidence="1">Multi-pass membrane protein</topology>
    </subcellularLocation>
</comment>
<comment type="sequence caution" evidence="6">
    <conflict type="erroneous initiation">
        <sequence resource="EMBL-CDS" id="BAB95310"/>
    </conflict>
</comment>
<reference key="1">
    <citation type="journal article" date="2002" name="Lancet">
        <title>Genome and virulence determinants of high virulence community-acquired MRSA.</title>
        <authorList>
            <person name="Baba T."/>
            <person name="Takeuchi F."/>
            <person name="Kuroda M."/>
            <person name="Yuzawa H."/>
            <person name="Aoki K."/>
            <person name="Oguchi A."/>
            <person name="Nagai Y."/>
            <person name="Iwama N."/>
            <person name="Asano K."/>
            <person name="Naimi T."/>
            <person name="Kuroda H."/>
            <person name="Cui L."/>
            <person name="Yamamoto K."/>
            <person name="Hiramatsu K."/>
        </authorList>
    </citation>
    <scope>NUCLEOTIDE SEQUENCE [LARGE SCALE GENOMIC DNA]</scope>
    <source>
        <strain>MW2</strain>
    </source>
</reference>
<accession>Q8NWF3</accession>
<gene>
    <name type="primary">srrB</name>
    <name type="ordered locus">MW1445</name>
</gene>